<keyword id="KW-0002">3D-structure</keyword>
<keyword id="KW-0007">Acetylation</keyword>
<keyword id="KW-0025">Alternative splicing</keyword>
<keyword id="KW-0067">ATP-binding</keyword>
<keyword id="KW-0156">Chromatin regulator</keyword>
<keyword id="KW-0238">DNA-binding</keyword>
<keyword id="KW-0347">Helicase</keyword>
<keyword id="KW-0378">Hydrolase</keyword>
<keyword id="KW-0547">Nucleotide-binding</keyword>
<keyword id="KW-0539">Nucleus</keyword>
<keyword id="KW-0597">Phosphoprotein</keyword>
<keyword id="KW-1267">Proteomics identification</keyword>
<keyword id="KW-1185">Reference proteome</keyword>
<accession>Q96L91</accession>
<accession>O15411</accession>
<accession>Q6P2F5</accession>
<accession>Q8N8Q7</accession>
<accession>Q8NE05</accession>
<accession>Q96JK7</accession>
<accession>Q9P230</accession>
<proteinExistence type="evidence at protein level"/>
<gene>
    <name type="primary">EP400</name>
    <name type="synonym">CAGH32</name>
    <name type="synonym">KIAA1498</name>
    <name type="synonym">KIAA1818</name>
    <name type="synonym">TNRC12</name>
</gene>
<sequence>MHHGTGPQNVQHQLQRSRACPGSEGEEQPAHPNPPPSPAAPFAPSASPSAPQSPSYQIQQLMNRSPATGQNVNITLQSVGPVVGGNQQITLAPLPLPSPTSPGFQFSAQPRRFEHGSPSYIQVTSPLSQQVQTQSPTQPSPGPGQALQNVRAGAPGPGLGLCSSSPTGGFVDASVLVRQISLSPSSGGHFVFQDGSGLTQIAQGAQVQLQHPGTPITVRERRPSQPHTQSGGTIHHLGPQSPAAAGGAGLQPLASPSHITTANLPPQISSIIQGQLVQQQQVLQGPPLPRPLGFERTPGVLLPGAGGAAGFGMTSPPPPTSPSRTAVPPGLSSLPLTSVGNTGMKKVPKKLEEIPPASPEMAQMRKQCLDYHYQEMQALKEVFKEYLIELFFLQHFQGNMMDFLAFKKKHYAPLQAYLRQNDLDIEEEEEEEEEEEEKSEVINDEVKVVTGKDGQTGTPVAIATQLPPKVSAAFSSQQQPFQQALAGSLVAGAGSTVETDLFKRQQAMPSTGMAEQSKRPRLEVGHQGVVFQHPGADAGVPLQQLMPTAQGGMPPTPQAAQLAGQRQSQQQYDPSTGPPVQNAASLHTPLPQLPGRLPPAGVPTAALSSALQFAQQPQVVEAQTQLQIPVKTQQPNVPIPAPPSSQLPIPPSQPAQLALHVPTPGKVQVQASQLSSLPQMVASTRLPVDPAPPCPRPLPTSSTSSLAPVSGSGPGPSPARSSPVNRPSSATNKALSPVTSRTPGVVASAPTKPQSPAQNATSSQDSSQDTLTEQITLENQVHQRIAELRKAGLWSQRRLPKLQEAPRPKSHWDYLLEEMQWMATDFAQERRWKVAAAKKLVRTVVRHHEEKQLREERGKKEEQSRLRRIAASTAREIECFWSNIEQVVEIKLRVELEEKRKKALNLQKVSRRGKELRPKGFDALQESSLDSGMSGRKRKASISLTDDEVDDEEETIEEEEANEGVVDHQTELSNLAKEAELPLLDLMKLYEGAFLPSSQWPRPKPDGEDTSGEEDADDCPGDRESRKDLVLIDSLFIMDQFKAAERMNIGKPNAKDIADVTAVAEAILPKGSARVTTSVKFNAPSLLYGALRDYQKIGLDWLAKLYRKNLNGILADEAGLGKTVQIIAFFAHLACNEGNWGPHLVVVRSCNILKWELELKRWCPGLKILSYIGSHRELKAKRQEWAEPNSFHVCITSYTQFFRGLTAFTRVRWKCLVIDEMQRVKGMTERHWEAVFTLQSQQRLLLIDSPLHNTFLELWTMVHFLVPGISRPYLSSPLRAPSEESQDYYHKVVIRLHRVTQPFILRRTKRDVEKQLTKKYEHVLKCRLSNRQKALYEDVILQPGTQEALKSGHFVNVLSILVRLQRICNHPGLVEPRHPGSSYVAGPLEYPSASLILKALERDFWKEADLSMFDLIGLENKITRHEAELLSKKKIPRKLMEEISTSAAPAARPAAAKLKASRLFQPVQYGQKPEGRTVAFPSTHPPRTAAPTTASAAPQGPLRGRPPIATFSANPEAKAAAAPFQTSQASASAPRHQPASASSTAASPAHPAKLRAQTTAQASTPGQPPPQPQAPSHAAGQSALPQRLVLPSQAQARLPSGEVVKIAQLASITGPQSRVAQPETPVTLQFQGSKFTLSHSQLRQLTAGQPLQLQGSVLQIVSAPGQPYLRAPGPVVMQTVSQAGAVHGALGSKPPAGGPSPAPLTPQVGVPGRVAVNALAVGEPGTASKPASPIGGPTQEEKTRLLKERLDQIYLVNERRCSQAPVYGRDLLRICALPSHGRVQWRGSLDGRRGKEAGPAHSYTSSSESPSELMLTLCRCGESLQDVIDRVAFVIPPVVAAPPSLRVPRPPPLYSHRMRILRQGLREHAAPYFQQLRQTTAPRLLQFPELRLVQFDSGKLEALAILLQKLKSEGRRVLILSQMILMLDILEMFLNFHYLTYVRIDENASSEQRQELMRSFNRDRRIFCAILSTHSRTTGINLVEADTVVFYDNDLNPVMDAKAQEWCDRIGRCKDIHIYRLVSGNSIEEKLLKNGTKDLIREVAAQGNDYSMAFLTQRTIQELFEVYSPMDDAGFPVKAEEFVVLSQEPSVTETIAPKIARPFIEALKSIEYLEEDAQKSAQEGVLGPHTDALSSDSENMPCDEEPSQLEELADFMEQLTPIEKYALNYLELFHTSIEQEKERNSEDAVMTAVRAWEFWNLKTLQEREARLRLEQEEAELLTYTREDAYSMEYVYEDVDGQTEVMPLWTPPTPPQDDSDIYLDSVMCLMYEATPIPEAKLPPVYVRKERKRHKTDPSAAGRKKKQRHGEAVVPPRSLFDRATPGLLKIRREGKEQKKNILLKQQVPFAKPLPTFAKPTAEPGQDNPEWLISEDWALLQAVKQLLELPLNLTIVSPAHTPNWDLVSDVVNSCSRIYRSSKQCRNRYENVIIPREEGKSKNNRPLRTSQIYAQDENATHTQLYTSHFDLMKMTAGKRSPPIKPLLGMNPFQKNPKHASVLAESGINYDKPLPPIQVASLRAERIAKEKKALADQQKAQQPAVAQPPPPQPQPPPPPQQPPPPLPQPQAAGSQPPAGPPAVQPQPQPQPQTQPQPVQAPAKAQPAITTGGSAAVLAGTIKTSVTGTSMPTGAVSGNVIVNTIAGVPAATFQSINKRLASPVAPGALTTPGGSAPAQVVHTQPPPRAVGSPATATPDLVSMATTQGVRAVTSVTASAVVTTNLTPVQTPARSLVPQVSQATGVQLPGKTITPAHFQLLRQQQQQQQQQQQQQQQQQQQQQQQQQQQQQTTTTSQVQVPQIQGQAQSPAQIKAVGKLTPEHLIKMQKQKLQMPPQPPPPQAQSAPPQPTAQVQVQTSQPPQQQSPQLTTVTAPRPGALLTGTTVANLQVARLTRVPTSQLQAQGQMQTQAPQPAQVALAKPPVVSVPAAVVSSPGVTTLPMNVAGISVAIGQPQKAAGQTVVAQPVHMQQLLKLKQQAVQQQKAIQPQAAQGPAAVQQKITAQQITTPGAQQKVAYAAQPALKTQFLTTPISQAQKLAGAQQVQTQIQVAKLPQVVQQQTPVASIQQVASASQQASPQTVALTQATAAGQQVQMIPAVTATAQVVQQKLIQQQVVTTASAPLQTPGAPNPAQVPASSDSPSQQPKLQMRVPAVRLKTPTKPPCQ</sequence>
<evidence type="ECO:0000250" key="1"/>
<evidence type="ECO:0000250" key="2">
    <source>
        <dbReference type="UniProtKB" id="Q8CHI8"/>
    </source>
</evidence>
<evidence type="ECO:0000255" key="3">
    <source>
        <dbReference type="PROSITE-ProRule" id="PRU00133"/>
    </source>
</evidence>
<evidence type="ECO:0000255" key="4">
    <source>
        <dbReference type="PROSITE-ProRule" id="PRU00541"/>
    </source>
</evidence>
<evidence type="ECO:0000255" key="5">
    <source>
        <dbReference type="PROSITE-ProRule" id="PRU00542"/>
    </source>
</evidence>
<evidence type="ECO:0000255" key="6">
    <source>
        <dbReference type="PROSITE-ProRule" id="PRU00549"/>
    </source>
</evidence>
<evidence type="ECO:0000256" key="7">
    <source>
        <dbReference type="SAM" id="MobiDB-lite"/>
    </source>
</evidence>
<evidence type="ECO:0000269" key="8">
    <source>
    </source>
</evidence>
<evidence type="ECO:0000269" key="9">
    <source>
    </source>
</evidence>
<evidence type="ECO:0000269" key="10">
    <source>
    </source>
</evidence>
<evidence type="ECO:0000269" key="11">
    <source>
    </source>
</evidence>
<evidence type="ECO:0000269" key="12">
    <source>
    </source>
</evidence>
<evidence type="ECO:0000303" key="13">
    <source>
    </source>
</evidence>
<evidence type="ECO:0000303" key="14">
    <source>
    </source>
</evidence>
<evidence type="ECO:0000303" key="15">
    <source>
    </source>
</evidence>
<evidence type="ECO:0000303" key="16">
    <source>
    </source>
</evidence>
<evidence type="ECO:0000305" key="17"/>
<evidence type="ECO:0007744" key="18">
    <source>
    </source>
</evidence>
<evidence type="ECO:0007744" key="19">
    <source>
    </source>
</evidence>
<evidence type="ECO:0007744" key="20">
    <source>
    </source>
</evidence>
<evidence type="ECO:0007744" key="21">
    <source>
    </source>
</evidence>
<evidence type="ECO:0007744" key="22">
    <source>
    </source>
</evidence>
<evidence type="ECO:0007744" key="23">
    <source>
    </source>
</evidence>
<evidence type="ECO:0007829" key="24">
    <source>
        <dbReference type="PDB" id="8QRI"/>
    </source>
</evidence>
<evidence type="ECO:0007829" key="25">
    <source>
        <dbReference type="PDB" id="8XVT"/>
    </source>
</evidence>
<evidence type="ECO:0007829" key="26">
    <source>
        <dbReference type="PDB" id="8XVV"/>
    </source>
</evidence>
<evidence type="ECO:0007829" key="27">
    <source>
        <dbReference type="PDB" id="9C47"/>
    </source>
</evidence>
<evidence type="ECO:0007829" key="28">
    <source>
        <dbReference type="PDB" id="9C57"/>
    </source>
</evidence>
<protein>
    <recommendedName>
        <fullName>E1A-binding protein p400</fullName>
        <ecNumber>3.6.4.-</ecNumber>
    </recommendedName>
    <alternativeName>
        <fullName>CAG repeat protein 32</fullName>
    </alternativeName>
    <alternativeName>
        <fullName>Domino homolog</fullName>
        <shortName>hDomino</shortName>
    </alternativeName>
    <alternativeName>
        <fullName>Trinucleotide repeat-containing gene 12 protein</fullName>
    </alternativeName>
    <alternativeName>
        <fullName>p400 kDa SWI2/SNF2-related protein</fullName>
    </alternativeName>
</protein>
<name>EP400_HUMAN</name>
<comment type="function">
    <text evidence="9 12">Component of the NuA4 histone acetyltransferase complex which is involved in transcriptional activation of select genes principally by acetylation of nucleosomal histones H4 and H2A. This modification may both alter nucleosome - DNA interactions and promote interaction of the modified histones with other proteins which positively regulate transcription. May be required for transcriptional activation of E2F1 and MYC target genes during cellular proliferation. The NuA4 complex ATPase and helicase activities seem to be, at least in part, contributed by the association of RUVBL1 and RUVBL2 with EP400. May regulate ZNF42 transcription activity. Component of a SWR1-like complex that specifically mediates the removal of histone H2A.Z/H2AZ1 from the nucleosome.</text>
</comment>
<comment type="subunit">
    <text evidence="1 10 11">Component of the NuA4 histone acetyltransferase complex which contains the catalytic subunit KAT5/TIP60 and the subunits EP400, TRRAP/PAF400, BRD8/SMAP, EPC1, DMAP1/DNMAP1, RUVBL1/TIP49, RUVBL2, ING3, actin, ACTL6A/BAF53A, MORF4L1/MRG15, MORF4L2/MRGX, MRGBP, YEATS4/GAS41, VPS72/YL1 and MEAF6. May also participate in the formation of NuA4 related complexes which lack the KAT5/TIP60 catalytic subunit, but which include the SWI/SNF related protein SRCAP. The NuA4 complex interacts with MYC and the adenovirus E1A protein. EP400 interacts with TRRAP, RUVBL1 and RUVBL2. Component of a SWR1-like complex. Interacts with ZNF42. Interacts with PHF5A. Interacts with human cytomegalovirus UL27. Interacts with human adenovirus 5 E1A protein; this interaction stabilizes MYC (PubMed:18413597).</text>
</comment>
<comment type="interaction">
    <interactant intactId="EBI-399163">
        <id>Q96L91</id>
    </interactant>
    <interactant intactId="EBI-3905054">
        <id>P13196</id>
        <label>ALAS1</label>
    </interactant>
    <organismsDiffer>false</organismsDiffer>
    <experiments>4</experiments>
</comment>
<comment type="interaction">
    <interactant intactId="EBI-399163">
        <id>Q96L91</id>
    </interactant>
    <interactant intactId="EBI-447544">
        <id>P01106</id>
        <label>MYC</label>
    </interactant>
    <organismsDiffer>false</organismsDiffer>
    <experiments>6</experiments>
</comment>
<comment type="interaction">
    <interactant intactId="EBI-399163">
        <id>Q96L91</id>
    </interactant>
    <interactant intactId="EBI-355676">
        <id>P09874</id>
        <label>PARP1</label>
    </interactant>
    <organismsDiffer>false</organismsDiffer>
    <experiments>2</experiments>
</comment>
<comment type="interaction">
    <interactant intactId="EBI-399163">
        <id>Q96L91</id>
    </interactant>
    <interactant intactId="EBI-352939">
        <id>Q9Y230</id>
        <label>RUVBL2</label>
    </interactant>
    <organismsDiffer>false</organismsDiffer>
    <experiments>5</experiments>
</comment>
<comment type="interaction">
    <interactant intactId="EBI-15698003">
        <id>Q96L91-2</id>
    </interactant>
    <interactant intactId="EBI-447544">
        <id>P01106</id>
        <label>MYC</label>
    </interactant>
    <organismsDiffer>false</organismsDiffer>
    <experiments>2</experiments>
</comment>
<comment type="subcellular location">
    <subcellularLocation>
        <location evidence="6">Nucleus</location>
    </subcellularLocation>
</comment>
<comment type="alternative products">
    <event type="alternative splicing"/>
    <isoform>
        <id>Q96L91-1</id>
        <name>1</name>
        <sequence type="displayed"/>
    </isoform>
    <isoform>
        <id>Q96L91-2</id>
        <name>2</name>
        <sequence type="described" ref="VSP_011992"/>
    </isoform>
    <isoform>
        <id>Q96L91-3</id>
        <name>3</name>
        <sequence type="described" ref="VSP_011992 VSP_011993 VSP_011994"/>
    </isoform>
    <isoform>
        <id>Q96L91-4</id>
        <name>4</name>
        <sequence type="described" ref="VSP_011992 VSP_011995"/>
    </isoform>
    <isoform>
        <id>Q96L91-5</id>
        <name>5</name>
        <sequence type="described" ref="VSP_011992 VSP_011993"/>
    </isoform>
</comment>
<comment type="tissue specificity">
    <text evidence="8">Ubiquitously expressed.</text>
</comment>
<comment type="similarity">
    <text evidence="17">Belongs to the SNF2/RAD54 helicase family. SWR1 subfamily.</text>
</comment>
<comment type="sequence caution" evidence="17">
    <conflict type="frameshift">
        <sequence resource="EMBL-CDS" id="AAB91441"/>
    </conflict>
</comment>
<comment type="sequence caution" evidence="17">
    <conflict type="miscellaneous discrepancy">
        <sequence resource="EMBL-CDS" id="AAH37208"/>
    </conflict>
    <text>Intron retention.</text>
</comment>
<comment type="sequence caution" evidence="17">
    <conflict type="miscellaneous discrepancy">
        <sequence resource="EMBL-CDS" id="AAH64554"/>
    </conflict>
    <text>Contaminating sequence. Potential poly-A sequence.</text>
</comment>
<comment type="sequence caution" evidence="17">
    <conflict type="erroneous initiation">
        <sequence resource="EMBL-CDS" id="BAA96022"/>
    </conflict>
    <text>Extended N-terminus.</text>
</comment>
<comment type="online information" name="Atlas of Genetics and Cytogenetics in Oncology and Haematology">
    <link uri="https://atlasgeneticsoncology.org/gene/40457/EP400"/>
</comment>
<organism>
    <name type="scientific">Homo sapiens</name>
    <name type="common">Human</name>
    <dbReference type="NCBI Taxonomy" id="9606"/>
    <lineage>
        <taxon>Eukaryota</taxon>
        <taxon>Metazoa</taxon>
        <taxon>Chordata</taxon>
        <taxon>Craniata</taxon>
        <taxon>Vertebrata</taxon>
        <taxon>Euteleostomi</taxon>
        <taxon>Mammalia</taxon>
        <taxon>Eutheria</taxon>
        <taxon>Euarchontoglires</taxon>
        <taxon>Primates</taxon>
        <taxon>Haplorrhini</taxon>
        <taxon>Catarrhini</taxon>
        <taxon>Hominidae</taxon>
        <taxon>Homo</taxon>
    </lineage>
</organism>
<feature type="chain" id="PRO_0000074312" description="E1A-binding protein p400">
    <location>
        <begin position="1"/>
        <end position="3159"/>
    </location>
</feature>
<feature type="domain" description="HSA" evidence="6">
    <location>
        <begin position="799"/>
        <end position="871"/>
    </location>
</feature>
<feature type="domain" description="Helicase ATP-binding" evidence="4">
    <location>
        <begin position="1103"/>
        <end position="1268"/>
    </location>
</feature>
<feature type="domain" description="Helicase C-terminal" evidence="5">
    <location>
        <begin position="1899"/>
        <end position="2056"/>
    </location>
</feature>
<feature type="domain" description="Myb-like" evidence="3">
    <location>
        <begin position="2360"/>
        <end position="2429"/>
    </location>
</feature>
<feature type="region of interest" description="Disordered" evidence="7">
    <location>
        <begin position="1"/>
        <end position="65"/>
    </location>
</feature>
<feature type="region of interest" description="Disordered" evidence="7">
    <location>
        <begin position="125"/>
        <end position="154"/>
    </location>
</feature>
<feature type="region of interest" description="Disordered" evidence="7">
    <location>
        <begin position="212"/>
        <end position="261"/>
    </location>
</feature>
<feature type="region of interest" description="Disordered" evidence="7">
    <location>
        <begin position="282"/>
        <end position="359"/>
    </location>
</feature>
<feature type="region of interest" description="Disordered" evidence="7">
    <location>
        <begin position="545"/>
        <end position="594"/>
    </location>
</feature>
<feature type="region of interest" description="Disordered" evidence="7">
    <location>
        <begin position="633"/>
        <end position="658"/>
    </location>
</feature>
<feature type="region of interest" description="Disordered" evidence="7">
    <location>
        <begin position="684"/>
        <end position="770"/>
    </location>
</feature>
<feature type="region of interest" description="Disordered" evidence="7">
    <location>
        <begin position="915"/>
        <end position="967"/>
    </location>
</feature>
<feature type="region of interest" description="Interactions with RUVBL1 and RUVBL2">
    <location>
        <begin position="951"/>
        <end position="1365"/>
    </location>
</feature>
<feature type="region of interest" description="Disordered" evidence="7">
    <location>
        <begin position="997"/>
        <end position="1024"/>
    </location>
</feature>
<feature type="region of interest" description="Disordered" evidence="7">
    <location>
        <begin position="1467"/>
        <end position="1582"/>
    </location>
</feature>
<feature type="region of interest" description="Disordered" evidence="7">
    <location>
        <begin position="1787"/>
        <end position="1807"/>
    </location>
</feature>
<feature type="region of interest" description="Disordered" evidence="7">
    <location>
        <begin position="2119"/>
        <end position="2144"/>
    </location>
</feature>
<feature type="region of interest" description="Disordered" evidence="7">
    <location>
        <begin position="2287"/>
        <end position="2311"/>
    </location>
</feature>
<feature type="region of interest" description="Interaction with ZNF42" evidence="1">
    <location>
        <begin position="2524"/>
        <end position="2789"/>
    </location>
</feature>
<feature type="region of interest" description="Disordered" evidence="7">
    <location>
        <begin position="2524"/>
        <end position="2602"/>
    </location>
</feature>
<feature type="region of interest" description="Disordered" evidence="7">
    <location>
        <begin position="2665"/>
        <end position="2688"/>
    </location>
</feature>
<feature type="region of interest" description="Disordered" evidence="7">
    <location>
        <begin position="2821"/>
        <end position="2869"/>
    </location>
</feature>
<feature type="region of interest" description="Disordered" evidence="7">
    <location>
        <begin position="3115"/>
        <end position="3159"/>
    </location>
</feature>
<feature type="short sequence motif" description="DEAH box-like">
    <location>
        <begin position="1219"/>
        <end position="1222"/>
    </location>
</feature>
<feature type="compositionally biased region" description="Polar residues" evidence="7">
    <location>
        <begin position="1"/>
        <end position="16"/>
    </location>
</feature>
<feature type="compositionally biased region" description="Pro residues" evidence="7">
    <location>
        <begin position="31"/>
        <end position="41"/>
    </location>
</feature>
<feature type="compositionally biased region" description="Low complexity" evidence="7">
    <location>
        <begin position="42"/>
        <end position="55"/>
    </location>
</feature>
<feature type="compositionally biased region" description="Polar residues" evidence="7">
    <location>
        <begin position="56"/>
        <end position="65"/>
    </location>
</feature>
<feature type="compositionally biased region" description="Low complexity" evidence="7">
    <location>
        <begin position="125"/>
        <end position="137"/>
    </location>
</feature>
<feature type="compositionally biased region" description="Low complexity" evidence="7">
    <location>
        <begin position="237"/>
        <end position="256"/>
    </location>
</feature>
<feature type="compositionally biased region" description="Low complexity" evidence="7">
    <location>
        <begin position="558"/>
        <end position="571"/>
    </location>
</feature>
<feature type="compositionally biased region" description="Polar residues" evidence="7">
    <location>
        <begin position="572"/>
        <end position="585"/>
    </location>
</feature>
<feature type="compositionally biased region" description="Pro residues" evidence="7">
    <location>
        <begin position="637"/>
        <end position="653"/>
    </location>
</feature>
<feature type="compositionally biased region" description="Pro residues" evidence="7">
    <location>
        <begin position="689"/>
        <end position="698"/>
    </location>
</feature>
<feature type="compositionally biased region" description="Low complexity" evidence="7">
    <location>
        <begin position="699"/>
        <end position="711"/>
    </location>
</feature>
<feature type="compositionally biased region" description="Polar residues" evidence="7">
    <location>
        <begin position="725"/>
        <end position="742"/>
    </location>
</feature>
<feature type="compositionally biased region" description="Polar residues" evidence="7">
    <location>
        <begin position="751"/>
        <end position="760"/>
    </location>
</feature>
<feature type="compositionally biased region" description="Low complexity" evidence="7">
    <location>
        <begin position="761"/>
        <end position="770"/>
    </location>
</feature>
<feature type="compositionally biased region" description="Acidic residues" evidence="7">
    <location>
        <begin position="945"/>
        <end position="962"/>
    </location>
</feature>
<feature type="compositionally biased region" description="Acidic residues" evidence="7">
    <location>
        <begin position="1008"/>
        <end position="1019"/>
    </location>
</feature>
<feature type="compositionally biased region" description="Low complexity" evidence="7">
    <location>
        <begin position="1481"/>
        <end position="1498"/>
    </location>
</feature>
<feature type="compositionally biased region" description="Low complexity" evidence="7">
    <location>
        <begin position="1538"/>
        <end position="1565"/>
    </location>
</feature>
<feature type="compositionally biased region" description="Basic and acidic residues" evidence="7">
    <location>
        <begin position="1789"/>
        <end position="1798"/>
    </location>
</feature>
<feature type="compositionally biased region" description="Low complexity" evidence="7">
    <location>
        <begin position="2530"/>
        <end position="2540"/>
    </location>
</feature>
<feature type="compositionally biased region" description="Pro residues" evidence="7">
    <location>
        <begin position="2541"/>
        <end position="2563"/>
    </location>
</feature>
<feature type="compositionally biased region" description="Pro residues" evidence="7">
    <location>
        <begin position="2572"/>
        <end position="2589"/>
    </location>
</feature>
<feature type="compositionally biased region" description="Low complexity" evidence="7">
    <location>
        <begin position="2590"/>
        <end position="2602"/>
    </location>
</feature>
<feature type="compositionally biased region" description="Pro residues" evidence="7">
    <location>
        <begin position="2828"/>
        <end position="2843"/>
    </location>
</feature>
<feature type="compositionally biased region" description="Low complexity" evidence="7">
    <location>
        <begin position="2844"/>
        <end position="2866"/>
    </location>
</feature>
<feature type="compositionally biased region" description="Polar residues" evidence="7">
    <location>
        <begin position="3129"/>
        <end position="3140"/>
    </location>
</feature>
<feature type="binding site" evidence="4">
    <location>
        <begin position="1116"/>
        <end position="1123"/>
    </location>
    <ligand>
        <name>ATP</name>
        <dbReference type="ChEBI" id="CHEBI:30616"/>
    </ligand>
</feature>
<feature type="modified residue" description="Phosphoserine" evidence="2">
    <location>
        <position position="53"/>
    </location>
</feature>
<feature type="modified residue" description="Phosphoserine" evidence="2">
    <location>
        <position position="135"/>
    </location>
</feature>
<feature type="modified residue" description="Phosphoserine" evidence="2">
    <location>
        <position position="315"/>
    </location>
</feature>
<feature type="modified residue" description="Phosphoserine" evidence="2">
    <location>
        <position position="321"/>
    </location>
</feature>
<feature type="modified residue" description="Phosphoserine" evidence="20 21 22 23">
    <location>
        <position position="736"/>
    </location>
</feature>
<feature type="modified residue" description="Phosphoserine" evidence="2">
    <location>
        <position position="755"/>
    </location>
</feature>
<feature type="modified residue" description="Phosphoserine" evidence="2">
    <location>
        <position position="928"/>
    </location>
</feature>
<feature type="modified residue" description="Phosphoserine" evidence="18">
    <location>
        <position position="941"/>
    </location>
</feature>
<feature type="modified residue" description="Phosphothreonine" evidence="18">
    <location>
        <position position="945"/>
    </location>
</feature>
<feature type="modified residue" description="Phosphoserine" evidence="2">
    <location>
        <position position="1011"/>
    </location>
</feature>
<feature type="modified residue" description="N6-acetyllysine" evidence="19">
    <location>
        <position position="1472"/>
    </location>
</feature>
<feature type="modified residue" description="Phosphoserine" evidence="22">
    <location>
        <position position="1547"/>
    </location>
</feature>
<feature type="modified residue" description="Phosphoserine" evidence="18">
    <location>
        <position position="1728"/>
    </location>
</feature>
<feature type="modified residue" description="Phosphoserine" evidence="18">
    <location>
        <position position="1732"/>
    </location>
</feature>
<feature type="modified residue" description="N6-acetyllysine" evidence="19">
    <location>
        <position position="2349"/>
    </location>
</feature>
<feature type="modified residue" description="N6-acetyllysine" evidence="19">
    <location>
        <position position="2356"/>
    </location>
</feature>
<feature type="modified residue" description="Phosphoserine" evidence="22">
    <location>
        <position position="2686"/>
    </location>
</feature>
<feature type="modified residue" description="Phosphothreonine" evidence="20 22">
    <location>
        <position position="2813"/>
    </location>
</feature>
<feature type="splice variant" id="VSP_011992" description="In isoform 2, isoform 3, isoform 4 and isoform 5." evidence="13 14 15 16">
    <location>
        <begin position="446"/>
        <end position="481"/>
    </location>
</feature>
<feature type="splice variant" id="VSP_011993" description="In isoform 3 and isoform 5." evidence="15 16">
    <location>
        <position position="482"/>
    </location>
</feature>
<feature type="splice variant" id="VSP_011994" description="In isoform 3." evidence="15 16">
    <location>
        <begin position="515"/>
        <end position="550"/>
    </location>
</feature>
<feature type="splice variant" id="VSP_011995" description="In isoform 4." evidence="13">
    <original>AAAAPFQTSQASASAPRHQPASASSTAASPAHPAKLRAQTTAQASTPGQPPPQPQAPSHAAGQSALPQRLVLPSQAQARLPS</original>
    <variation>G</variation>
    <location>
        <begin position="1519"/>
        <end position="1600"/>
    </location>
</feature>
<feature type="sequence variant" id="VAR_046957" description="In dbSNP:rs13377636.">
    <original>T</original>
    <variation>I</variation>
    <location>
        <position position="1308"/>
    </location>
</feature>
<feature type="sequence conflict" description="In Ref. 5; AAH37208." evidence="17" ref="5">
    <original>D</original>
    <variation>G</variation>
    <location>
        <position position="537"/>
    </location>
</feature>
<feature type="sequence conflict" description="In Ref. 5; AAH37208." evidence="17" ref="5">
    <original>S</original>
    <variation>P</variation>
    <location>
        <position position="810"/>
    </location>
</feature>
<feature type="sequence conflict" description="In Ref. 1; AAK97789." evidence="17" ref="1">
    <original>S</original>
    <variation>F</variation>
    <location>
        <position position="1563"/>
    </location>
</feature>
<feature type="sequence conflict" description="In Ref. 1; AAK97789." evidence="17" ref="1">
    <original>L</original>
    <variation>F</variation>
    <location>
        <position position="1642"/>
    </location>
</feature>
<feature type="sequence conflict" description="In Ref. 1; AAK97789." evidence="17" ref="1">
    <original>L</original>
    <variation>F</variation>
    <location>
        <position position="1645"/>
    </location>
</feature>
<feature type="sequence conflict" description="In Ref. 1; AAK97789, 6; BAB47447 and 7; AAB91441." evidence="17" ref="1 6 7">
    <original>Q</original>
    <variation>QQ</variation>
    <location>
        <position position="2756"/>
    </location>
</feature>
<feature type="sequence conflict" description="In Ref. 1; AAK97789 and 7; AAB91441." evidence="17" ref="1 7">
    <original>T</original>
    <variation>A</variation>
    <location>
        <position position="2844"/>
    </location>
</feature>
<feature type="sequence conflict" description="In Ref. 1; AAK97789 and 7; AAB91441." evidence="17" ref="1 7">
    <original>A</original>
    <variation>S</variation>
    <location>
        <position position="2897"/>
    </location>
</feature>
<feature type="sequence conflict" description="In Ref. 1; AAK97789 and 7; AAB91441." evidence="17" ref="1 7">
    <original>ALA</original>
    <variation>PLP</variation>
    <location>
        <begin position="2912"/>
        <end position="2914"/>
    </location>
</feature>
<feature type="sequence conflict" description="In Ref. 1; AAK97789." evidence="17" ref="1">
    <original>A</original>
    <variation>T</variation>
    <location>
        <position position="2990"/>
    </location>
</feature>
<feature type="helix" evidence="28">
    <location>
        <begin position="783"/>
        <end position="792"/>
    </location>
</feature>
<feature type="strand" evidence="28">
    <location>
        <begin position="795"/>
        <end position="797"/>
    </location>
</feature>
<feature type="helix" evidence="28">
    <location>
        <begin position="811"/>
        <end position="907"/>
    </location>
</feature>
<feature type="helix" evidence="28">
    <location>
        <begin position="1058"/>
        <end position="1067"/>
    </location>
</feature>
<feature type="helix" evidence="28">
    <location>
        <begin position="1071"/>
        <end position="1075"/>
    </location>
</feature>
<feature type="helix" evidence="28">
    <location>
        <begin position="1093"/>
        <end position="1107"/>
    </location>
</feature>
<feature type="strand" evidence="28">
    <location>
        <begin position="1112"/>
        <end position="1114"/>
    </location>
</feature>
<feature type="helix" evidence="28">
    <location>
        <begin position="1122"/>
        <end position="1136"/>
    </location>
</feature>
<feature type="strand" evidence="28">
    <location>
        <begin position="1145"/>
        <end position="1147"/>
    </location>
</feature>
<feature type="helix" evidence="28">
    <location>
        <begin position="1151"/>
        <end position="1162"/>
    </location>
</feature>
<feature type="strand" evidence="28">
    <location>
        <begin position="1168"/>
        <end position="1170"/>
    </location>
</feature>
<feature type="helix" evidence="28">
    <location>
        <begin position="1175"/>
        <end position="1186"/>
    </location>
</feature>
<feature type="strand" evidence="28">
    <location>
        <begin position="1192"/>
        <end position="1197"/>
    </location>
</feature>
<feature type="helix" evidence="28">
    <location>
        <begin position="1198"/>
        <end position="1203"/>
    </location>
</feature>
<feature type="turn" evidence="28">
    <location>
        <begin position="1204"/>
        <end position="1206"/>
    </location>
</feature>
<feature type="helix" evidence="28">
    <location>
        <begin position="1207"/>
        <end position="1210"/>
    </location>
</feature>
<feature type="strand" evidence="28">
    <location>
        <begin position="1211"/>
        <end position="1218"/>
    </location>
</feature>
<feature type="helix" evidence="28">
    <location>
        <begin position="1221"/>
        <end position="1223"/>
    </location>
</feature>
<feature type="helix" evidence="28">
    <location>
        <begin position="1229"/>
        <end position="1237"/>
    </location>
</feature>
<feature type="strand" evidence="28">
    <location>
        <begin position="1238"/>
        <end position="1246"/>
    </location>
</feature>
<feature type="helix" evidence="25">
    <location>
        <begin position="1255"/>
        <end position="1265"/>
    </location>
</feature>
<feature type="helix" evidence="25">
    <location>
        <begin position="1292"/>
        <end position="1299"/>
    </location>
</feature>
<feature type="strand" evidence="25">
    <location>
        <begin position="1301"/>
        <end position="1303"/>
    </location>
</feature>
<feature type="helix" evidence="25">
    <location>
        <begin position="1309"/>
        <end position="1312"/>
    </location>
</feature>
<feature type="helix" evidence="28">
    <location>
        <begin position="1313"/>
        <end position="1315"/>
    </location>
</feature>
<feature type="strand" evidence="28">
    <location>
        <begin position="1320"/>
        <end position="1326"/>
    </location>
</feature>
<feature type="helix" evidence="28">
    <location>
        <begin position="1330"/>
        <end position="1341"/>
    </location>
</feature>
<feature type="helix" evidence="28">
    <location>
        <begin position="1343"/>
        <end position="1351"/>
    </location>
</feature>
<feature type="helix" evidence="28">
    <location>
        <begin position="1354"/>
        <end position="1369"/>
    </location>
</feature>
<feature type="helix" evidence="28">
    <location>
        <begin position="1371"/>
        <end position="1373"/>
    </location>
</feature>
<feature type="strand" evidence="28">
    <location>
        <begin position="1383"/>
        <end position="1385"/>
    </location>
</feature>
<feature type="strand" evidence="28">
    <location>
        <begin position="1389"/>
        <end position="1391"/>
    </location>
</feature>
<feature type="helix" evidence="28">
    <location>
        <begin position="1394"/>
        <end position="1397"/>
    </location>
</feature>
<feature type="turn" evidence="28">
    <location>
        <begin position="1398"/>
        <end position="1400"/>
    </location>
</feature>
<feature type="turn" evidence="28">
    <location>
        <begin position="1404"/>
        <end position="1406"/>
    </location>
</feature>
<feature type="helix" evidence="28">
    <location>
        <begin position="1411"/>
        <end position="1413"/>
    </location>
</feature>
<feature type="helix" evidence="28">
    <location>
        <begin position="1417"/>
        <end position="1420"/>
    </location>
</feature>
<feature type="helix" evidence="28">
    <location>
        <begin position="1424"/>
        <end position="1433"/>
    </location>
</feature>
<feature type="helix" evidence="28">
    <location>
        <begin position="1437"/>
        <end position="1445"/>
    </location>
</feature>
<feature type="turn" evidence="28">
    <location>
        <begin position="1460"/>
        <end position="1462"/>
    </location>
</feature>
<feature type="helix" evidence="28">
    <location>
        <begin position="1740"/>
        <end position="1762"/>
    </location>
</feature>
<feature type="helix" evidence="28">
    <location>
        <begin position="1769"/>
        <end position="1774"/>
    </location>
</feature>
<feature type="helix" evidence="25">
    <location>
        <begin position="1777"/>
        <end position="1779"/>
    </location>
</feature>
<feature type="helix" evidence="25">
    <location>
        <begin position="1787"/>
        <end position="1790"/>
    </location>
</feature>
<feature type="strand" evidence="28">
    <location>
        <begin position="1817"/>
        <end position="1820"/>
    </location>
</feature>
<feature type="helix" evidence="28">
    <location>
        <begin position="1825"/>
        <end position="1831"/>
    </location>
</feature>
<feature type="strand" evidence="28">
    <location>
        <begin position="1837"/>
        <end position="1840"/>
    </location>
</feature>
<feature type="strand" evidence="28">
    <location>
        <begin position="1844"/>
        <end position="1846"/>
    </location>
</feature>
<feature type="helix" evidence="28">
    <location>
        <begin position="1852"/>
        <end position="1865"/>
    </location>
</feature>
<feature type="turn" evidence="28">
    <location>
        <begin position="1866"/>
        <end position="1868"/>
    </location>
</feature>
<feature type="helix" evidence="28">
    <location>
        <begin position="1870"/>
        <end position="1872"/>
    </location>
</feature>
<feature type="helix" evidence="28">
    <location>
        <begin position="1873"/>
        <end position="1878"/>
    </location>
</feature>
<feature type="turn" evidence="28">
    <location>
        <begin position="1890"/>
        <end position="1895"/>
    </location>
</feature>
<feature type="helix" evidence="28">
    <location>
        <begin position="1898"/>
        <end position="1913"/>
    </location>
</feature>
<feature type="strand" evidence="28">
    <location>
        <begin position="1917"/>
        <end position="1922"/>
    </location>
</feature>
<feature type="helix" evidence="28">
    <location>
        <begin position="1924"/>
        <end position="1936"/>
    </location>
</feature>
<feature type="strand" evidence="28">
    <location>
        <begin position="1941"/>
        <end position="1944"/>
    </location>
</feature>
<feature type="strand" evidence="25">
    <location>
        <begin position="1946"/>
        <end position="1948"/>
    </location>
</feature>
<feature type="helix" evidence="28">
    <location>
        <begin position="1950"/>
        <end position="1962"/>
    </location>
</feature>
<feature type="strand" evidence="28">
    <location>
        <begin position="1968"/>
        <end position="1972"/>
    </location>
</feature>
<feature type="strand" evidence="25">
    <location>
        <begin position="1973"/>
        <end position="1975"/>
    </location>
</feature>
<feature type="strand" evidence="28">
    <location>
        <begin position="1986"/>
        <end position="1992"/>
    </location>
</feature>
<feature type="helix" evidence="28">
    <location>
        <begin position="1997"/>
        <end position="2010"/>
    </location>
</feature>
<feature type="strand" evidence="28">
    <location>
        <begin position="2012"/>
        <end position="2014"/>
    </location>
</feature>
<feature type="strand" evidence="28">
    <location>
        <begin position="2017"/>
        <end position="2026"/>
    </location>
</feature>
<feature type="helix" evidence="28">
    <location>
        <begin position="2027"/>
        <end position="2031"/>
    </location>
</feature>
<feature type="helix" evidence="25">
    <location>
        <begin position="2037"/>
        <end position="2040"/>
    </location>
</feature>
<feature type="strand" evidence="25">
    <location>
        <begin position="2043"/>
        <end position="2047"/>
    </location>
</feature>
<feature type="helix" evidence="25">
    <location>
        <begin position="2055"/>
        <end position="2059"/>
    </location>
</feature>
<feature type="helix" evidence="28">
    <location>
        <begin position="2150"/>
        <end position="2156"/>
    </location>
</feature>
<feature type="helix" evidence="28">
    <location>
        <begin position="2161"/>
        <end position="2173"/>
    </location>
</feature>
<feature type="helix" evidence="28">
    <location>
        <begin position="2183"/>
        <end position="2216"/>
    </location>
</feature>
<feature type="strand" evidence="28">
    <location>
        <begin position="2221"/>
        <end position="2225"/>
    </location>
</feature>
<feature type="turn" evidence="28">
    <location>
        <begin position="2226"/>
        <end position="2228"/>
    </location>
</feature>
<feature type="strand" evidence="25">
    <location>
        <begin position="2234"/>
        <end position="2236"/>
    </location>
</feature>
<feature type="strand" evidence="25">
    <location>
        <begin position="2242"/>
        <end position="2244"/>
    </location>
</feature>
<feature type="helix" evidence="25">
    <location>
        <begin position="2264"/>
        <end position="2268"/>
    </location>
</feature>
<feature type="strand" evidence="25">
    <location>
        <begin position="2270"/>
        <end position="2272"/>
    </location>
</feature>
<feature type="helix" evidence="26">
    <location>
        <begin position="2370"/>
        <end position="2381"/>
    </location>
</feature>
<feature type="strand" evidence="26">
    <location>
        <begin position="2389"/>
        <end position="2391"/>
    </location>
</feature>
<feature type="turn" evidence="27">
    <location>
        <begin position="2393"/>
        <end position="2396"/>
    </location>
</feature>
<feature type="helix" evidence="26">
    <location>
        <begin position="2401"/>
        <end position="2408"/>
    </location>
</feature>
<feature type="strand" evidence="26">
    <location>
        <begin position="2411"/>
        <end position="2413"/>
    </location>
</feature>
<feature type="helix" evidence="26">
    <location>
        <begin position="2419"/>
        <end position="2433"/>
    </location>
</feature>
<feature type="turn" evidence="24">
    <location>
        <begin position="2438"/>
        <end position="2440"/>
    </location>
</feature>
<feature type="helix" evidence="26">
    <location>
        <begin position="2445"/>
        <end position="2450"/>
    </location>
</feature>
<feature type="strand" evidence="26">
    <location>
        <begin position="2451"/>
        <end position="2453"/>
    </location>
</feature>
<feature type="helix" evidence="26">
    <location>
        <begin position="2456"/>
        <end position="2475"/>
    </location>
</feature>
<feature type="helix" evidence="26">
    <location>
        <begin position="2493"/>
        <end position="2501"/>
    </location>
</feature>
<feature type="strand" evidence="26">
    <location>
        <begin position="2505"/>
        <end position="2507"/>
    </location>
</feature>
<feature type="helix" evidence="26">
    <location>
        <begin position="2511"/>
        <end position="2526"/>
    </location>
</feature>
<reference key="1">
    <citation type="journal article" date="2001" name="Cell">
        <title>The p400 complex is an essential E1A transformation target.</title>
        <authorList>
            <person name="Fuchs M."/>
            <person name="Gerber J."/>
            <person name="Drapkin R."/>
            <person name="Sif S."/>
            <person name="Ikura T."/>
            <person name="Ogryzko V."/>
            <person name="Lane W.S."/>
            <person name="Nakatani Y."/>
            <person name="Livingston D.M."/>
        </authorList>
    </citation>
    <scope>NUCLEOTIDE SEQUENCE [MRNA] (ISOFORM 2)</scope>
    <scope>IDENTIFICATION BY MASS SPECTROMETRY</scope>
    <scope>ROLE OF EP400-CONTAINING COMPLEXES IN CELLULAR TRANSFORMATION BY ADENOVIRUS E1A PROTEIN</scope>
    <scope>TISSUE SPECIFICITY</scope>
    <scope>INTERACTION WITH TRRAP; RUVBL1 AND RUVBL2</scope>
</reference>
<reference key="2">
    <citation type="journal article" date="2006" name="Nature">
        <title>The finished DNA sequence of human chromosome 12.</title>
        <authorList>
            <person name="Scherer S.E."/>
            <person name="Muzny D.M."/>
            <person name="Buhay C.J."/>
            <person name="Chen R."/>
            <person name="Cree A."/>
            <person name="Ding Y."/>
            <person name="Dugan-Rocha S."/>
            <person name="Gill R."/>
            <person name="Gunaratne P."/>
            <person name="Harris R.A."/>
            <person name="Hawes A.C."/>
            <person name="Hernandez J."/>
            <person name="Hodgson A.V."/>
            <person name="Hume J."/>
            <person name="Jackson A."/>
            <person name="Khan Z.M."/>
            <person name="Kovar-Smith C."/>
            <person name="Lewis L.R."/>
            <person name="Lozado R.J."/>
            <person name="Metzker M.L."/>
            <person name="Milosavljevic A."/>
            <person name="Miner G.R."/>
            <person name="Montgomery K.T."/>
            <person name="Morgan M.B."/>
            <person name="Nazareth L.V."/>
            <person name="Scott G."/>
            <person name="Sodergren E."/>
            <person name="Song X.-Z."/>
            <person name="Steffen D."/>
            <person name="Lovering R.C."/>
            <person name="Wheeler D.A."/>
            <person name="Worley K.C."/>
            <person name="Yuan Y."/>
            <person name="Zhang Z."/>
            <person name="Adams C.Q."/>
            <person name="Ansari-Lari M.A."/>
            <person name="Ayele M."/>
            <person name="Brown M.J."/>
            <person name="Chen G."/>
            <person name="Chen Z."/>
            <person name="Clerc-Blankenburg K.P."/>
            <person name="Davis C."/>
            <person name="Delgado O."/>
            <person name="Dinh H.H."/>
            <person name="Draper H."/>
            <person name="Gonzalez-Garay M.L."/>
            <person name="Havlak P."/>
            <person name="Jackson L.R."/>
            <person name="Jacob L.S."/>
            <person name="Kelly S.H."/>
            <person name="Li L."/>
            <person name="Li Z."/>
            <person name="Liu J."/>
            <person name="Liu W."/>
            <person name="Lu J."/>
            <person name="Maheshwari M."/>
            <person name="Nguyen B.-V."/>
            <person name="Okwuonu G.O."/>
            <person name="Pasternak S."/>
            <person name="Perez L.M."/>
            <person name="Plopper F.J.H."/>
            <person name="Santibanez J."/>
            <person name="Shen H."/>
            <person name="Tabor P.E."/>
            <person name="Verduzco D."/>
            <person name="Waldron L."/>
            <person name="Wang Q."/>
            <person name="Williams G.A."/>
            <person name="Zhang J."/>
            <person name="Zhou J."/>
            <person name="Allen C.C."/>
            <person name="Amin A.G."/>
            <person name="Anyalebechi V."/>
            <person name="Bailey M."/>
            <person name="Barbaria J.A."/>
            <person name="Bimage K.E."/>
            <person name="Bryant N.P."/>
            <person name="Burch P.E."/>
            <person name="Burkett C.E."/>
            <person name="Burrell K.L."/>
            <person name="Calderon E."/>
            <person name="Cardenas V."/>
            <person name="Carter K."/>
            <person name="Casias K."/>
            <person name="Cavazos I."/>
            <person name="Cavazos S.R."/>
            <person name="Ceasar H."/>
            <person name="Chacko J."/>
            <person name="Chan S.N."/>
            <person name="Chavez D."/>
            <person name="Christopoulos C."/>
            <person name="Chu J."/>
            <person name="Cockrell R."/>
            <person name="Cox C.D."/>
            <person name="Dang M."/>
            <person name="Dathorne S.R."/>
            <person name="David R."/>
            <person name="Davis C.M."/>
            <person name="Davy-Carroll L."/>
            <person name="Deshazo D.R."/>
            <person name="Donlin J.E."/>
            <person name="D'Souza L."/>
            <person name="Eaves K.A."/>
            <person name="Egan A."/>
            <person name="Emery-Cohen A.J."/>
            <person name="Escotto M."/>
            <person name="Flagg N."/>
            <person name="Forbes L.D."/>
            <person name="Gabisi A.M."/>
            <person name="Garza M."/>
            <person name="Hamilton C."/>
            <person name="Henderson N."/>
            <person name="Hernandez O."/>
            <person name="Hines S."/>
            <person name="Hogues M.E."/>
            <person name="Huang M."/>
            <person name="Idlebird D.G."/>
            <person name="Johnson R."/>
            <person name="Jolivet A."/>
            <person name="Jones S."/>
            <person name="Kagan R."/>
            <person name="King L.M."/>
            <person name="Leal B."/>
            <person name="Lebow H."/>
            <person name="Lee S."/>
            <person name="LeVan J.M."/>
            <person name="Lewis L.C."/>
            <person name="London P."/>
            <person name="Lorensuhewa L.M."/>
            <person name="Loulseged H."/>
            <person name="Lovett D.A."/>
            <person name="Lucier A."/>
            <person name="Lucier R.L."/>
            <person name="Ma J."/>
            <person name="Madu R.C."/>
            <person name="Mapua P."/>
            <person name="Martindale A.D."/>
            <person name="Martinez E."/>
            <person name="Massey E."/>
            <person name="Mawhiney S."/>
            <person name="Meador M.G."/>
            <person name="Mendez S."/>
            <person name="Mercado C."/>
            <person name="Mercado I.C."/>
            <person name="Merritt C.E."/>
            <person name="Miner Z.L."/>
            <person name="Minja E."/>
            <person name="Mitchell T."/>
            <person name="Mohabbat F."/>
            <person name="Mohabbat K."/>
            <person name="Montgomery B."/>
            <person name="Moore N."/>
            <person name="Morris S."/>
            <person name="Munidasa M."/>
            <person name="Ngo R.N."/>
            <person name="Nguyen N.B."/>
            <person name="Nickerson E."/>
            <person name="Nwaokelemeh O.O."/>
            <person name="Nwokenkwo S."/>
            <person name="Obregon M."/>
            <person name="Oguh M."/>
            <person name="Oragunye N."/>
            <person name="Oviedo R.J."/>
            <person name="Parish B.J."/>
            <person name="Parker D.N."/>
            <person name="Parrish J."/>
            <person name="Parks K.L."/>
            <person name="Paul H.A."/>
            <person name="Payton B.A."/>
            <person name="Perez A."/>
            <person name="Perrin W."/>
            <person name="Pickens A."/>
            <person name="Primus E.L."/>
            <person name="Pu L.-L."/>
            <person name="Puazo M."/>
            <person name="Quiles M.M."/>
            <person name="Quiroz J.B."/>
            <person name="Rabata D."/>
            <person name="Reeves K."/>
            <person name="Ruiz S.J."/>
            <person name="Shao H."/>
            <person name="Sisson I."/>
            <person name="Sonaike T."/>
            <person name="Sorelle R.P."/>
            <person name="Sutton A.E."/>
            <person name="Svatek A.F."/>
            <person name="Svetz L.A."/>
            <person name="Tamerisa K.S."/>
            <person name="Taylor T.R."/>
            <person name="Teague B."/>
            <person name="Thomas N."/>
            <person name="Thorn R.D."/>
            <person name="Trejos Z.Y."/>
            <person name="Trevino B.K."/>
            <person name="Ukegbu O.N."/>
            <person name="Urban J.B."/>
            <person name="Vasquez L.I."/>
            <person name="Vera V.A."/>
            <person name="Villasana D.M."/>
            <person name="Wang L."/>
            <person name="Ward-Moore S."/>
            <person name="Warren J.T."/>
            <person name="Wei X."/>
            <person name="White F."/>
            <person name="Williamson A.L."/>
            <person name="Wleczyk R."/>
            <person name="Wooden H.S."/>
            <person name="Wooden S.H."/>
            <person name="Yen J."/>
            <person name="Yoon L."/>
            <person name="Yoon V."/>
            <person name="Zorrilla S.E."/>
            <person name="Nelson D."/>
            <person name="Kucherlapati R."/>
            <person name="Weinstock G."/>
            <person name="Gibbs R.A."/>
        </authorList>
    </citation>
    <scope>NUCLEOTIDE SEQUENCE [LARGE SCALE GENOMIC DNA]</scope>
</reference>
<reference key="3">
    <citation type="journal article" date="2000" name="DNA Res.">
        <title>Prediction of the coding sequences of unidentified human genes. XVII. The complete sequences of 100 new cDNA clones from brain which code for large proteins in vitro.</title>
        <authorList>
            <person name="Nagase T."/>
            <person name="Kikuno R."/>
            <person name="Ishikawa K."/>
            <person name="Hirosawa M."/>
            <person name="Ohara O."/>
        </authorList>
    </citation>
    <scope>NUCLEOTIDE SEQUENCE [LARGE SCALE MRNA] OF 1-1847 (ISOFORM 4)</scope>
    <source>
        <tissue>Brain</tissue>
    </source>
</reference>
<reference key="4">
    <citation type="journal article" date="2004" name="Nat. Genet.">
        <title>Complete sequencing and characterization of 21,243 full-length human cDNAs.</title>
        <authorList>
            <person name="Ota T."/>
            <person name="Suzuki Y."/>
            <person name="Nishikawa T."/>
            <person name="Otsuki T."/>
            <person name="Sugiyama T."/>
            <person name="Irie R."/>
            <person name="Wakamatsu A."/>
            <person name="Hayashi K."/>
            <person name="Sato H."/>
            <person name="Nagai K."/>
            <person name="Kimura K."/>
            <person name="Makita H."/>
            <person name="Sekine M."/>
            <person name="Obayashi M."/>
            <person name="Nishi T."/>
            <person name="Shibahara T."/>
            <person name="Tanaka T."/>
            <person name="Ishii S."/>
            <person name="Yamamoto J."/>
            <person name="Saito K."/>
            <person name="Kawai Y."/>
            <person name="Isono Y."/>
            <person name="Nakamura Y."/>
            <person name="Nagahari K."/>
            <person name="Murakami K."/>
            <person name="Yasuda T."/>
            <person name="Iwayanagi T."/>
            <person name="Wagatsuma M."/>
            <person name="Shiratori A."/>
            <person name="Sudo H."/>
            <person name="Hosoiri T."/>
            <person name="Kaku Y."/>
            <person name="Kodaira H."/>
            <person name="Kondo H."/>
            <person name="Sugawara M."/>
            <person name="Takahashi M."/>
            <person name="Kanda K."/>
            <person name="Yokoi T."/>
            <person name="Furuya T."/>
            <person name="Kikkawa E."/>
            <person name="Omura Y."/>
            <person name="Abe K."/>
            <person name="Kamihara K."/>
            <person name="Katsuta N."/>
            <person name="Sato K."/>
            <person name="Tanikawa M."/>
            <person name="Yamazaki M."/>
            <person name="Ninomiya K."/>
            <person name="Ishibashi T."/>
            <person name="Yamashita H."/>
            <person name="Murakawa K."/>
            <person name="Fujimori K."/>
            <person name="Tanai H."/>
            <person name="Kimata M."/>
            <person name="Watanabe M."/>
            <person name="Hiraoka S."/>
            <person name="Chiba Y."/>
            <person name="Ishida S."/>
            <person name="Ono Y."/>
            <person name="Takiguchi S."/>
            <person name="Watanabe S."/>
            <person name="Yosida M."/>
            <person name="Hotuta T."/>
            <person name="Kusano J."/>
            <person name="Kanehori K."/>
            <person name="Takahashi-Fujii A."/>
            <person name="Hara H."/>
            <person name="Tanase T.-O."/>
            <person name="Nomura Y."/>
            <person name="Togiya S."/>
            <person name="Komai F."/>
            <person name="Hara R."/>
            <person name="Takeuchi K."/>
            <person name="Arita M."/>
            <person name="Imose N."/>
            <person name="Musashino K."/>
            <person name="Yuuki H."/>
            <person name="Oshima A."/>
            <person name="Sasaki N."/>
            <person name="Aotsuka S."/>
            <person name="Yoshikawa Y."/>
            <person name="Matsunawa H."/>
            <person name="Ichihara T."/>
            <person name="Shiohata N."/>
            <person name="Sano S."/>
            <person name="Moriya S."/>
            <person name="Momiyama H."/>
            <person name="Satoh N."/>
            <person name="Takami S."/>
            <person name="Terashima Y."/>
            <person name="Suzuki O."/>
            <person name="Nakagawa S."/>
            <person name="Senoh A."/>
            <person name="Mizoguchi H."/>
            <person name="Goto Y."/>
            <person name="Shimizu F."/>
            <person name="Wakebe H."/>
            <person name="Hishigaki H."/>
            <person name="Watanabe T."/>
            <person name="Sugiyama A."/>
            <person name="Takemoto M."/>
            <person name="Kawakami B."/>
            <person name="Yamazaki M."/>
            <person name="Watanabe K."/>
            <person name="Kumagai A."/>
            <person name="Itakura S."/>
            <person name="Fukuzumi Y."/>
            <person name="Fujimori Y."/>
            <person name="Komiyama M."/>
            <person name="Tashiro H."/>
            <person name="Tanigami A."/>
            <person name="Fujiwara T."/>
            <person name="Ono T."/>
            <person name="Yamada K."/>
            <person name="Fujii Y."/>
            <person name="Ozaki K."/>
            <person name="Hirao M."/>
            <person name="Ohmori Y."/>
            <person name="Kawabata A."/>
            <person name="Hikiji T."/>
            <person name="Kobatake N."/>
            <person name="Inagaki H."/>
            <person name="Ikema Y."/>
            <person name="Okamoto S."/>
            <person name="Okitani R."/>
            <person name="Kawakami T."/>
            <person name="Noguchi S."/>
            <person name="Itoh T."/>
            <person name="Shigeta K."/>
            <person name="Senba T."/>
            <person name="Matsumura K."/>
            <person name="Nakajima Y."/>
            <person name="Mizuno T."/>
            <person name="Morinaga M."/>
            <person name="Sasaki M."/>
            <person name="Togashi T."/>
            <person name="Oyama M."/>
            <person name="Hata H."/>
            <person name="Watanabe M."/>
            <person name="Komatsu T."/>
            <person name="Mizushima-Sugano J."/>
            <person name="Satoh T."/>
            <person name="Shirai Y."/>
            <person name="Takahashi Y."/>
            <person name="Nakagawa K."/>
            <person name="Okumura K."/>
            <person name="Nagase T."/>
            <person name="Nomura N."/>
            <person name="Kikuchi H."/>
            <person name="Masuho Y."/>
            <person name="Yamashita R."/>
            <person name="Nakai K."/>
            <person name="Yada T."/>
            <person name="Nakamura Y."/>
            <person name="Ohara O."/>
            <person name="Isogai T."/>
            <person name="Sugano S."/>
        </authorList>
    </citation>
    <scope>NUCLEOTIDE SEQUENCE [LARGE SCALE MRNA] OF 1-897 (ISOFORM 3)</scope>
</reference>
<reference key="5">
    <citation type="journal article" date="2004" name="Genome Res.">
        <title>The status, quality, and expansion of the NIH full-length cDNA project: the Mammalian Gene Collection (MGC).</title>
        <authorList>
            <consortium name="The MGC Project Team"/>
        </authorList>
    </citation>
    <scope>NUCLEOTIDE SEQUENCE [LARGE SCALE MRNA] OF 1-978 (ISOFORM 1)</scope>
    <scope>NUCLEOTIDE SEQUENCE [LARGE SCALE MRNA] OF 1-895 (ISOFORM 3)</scope>
    <source>
        <tissue>Lymph</tissue>
        <tissue>Testis</tissue>
    </source>
</reference>
<reference key="6">
    <citation type="journal article" date="2001" name="DNA Res.">
        <title>Prediction of the coding sequences of unidentified human genes. XX. The complete sequences of 100 new cDNA clones from brain which code for large proteins in vitro.</title>
        <authorList>
            <person name="Nagase T."/>
            <person name="Nakayama M."/>
            <person name="Nakajima D."/>
            <person name="Kikuno R."/>
            <person name="Ohara O."/>
        </authorList>
    </citation>
    <scope>NUCLEOTIDE SEQUENCE [LARGE SCALE MRNA] OF 2004-3159</scope>
    <source>
        <tissue>Brain</tissue>
    </source>
</reference>
<reference key="7">
    <citation type="journal article" date="1997" name="Hum. Genet.">
        <title>cDNAs with long CAG trinucleotide repeats from human brain.</title>
        <authorList>
            <person name="Margolis R.L."/>
            <person name="Abraham M.R."/>
            <person name="Gatchell S.B."/>
            <person name="Li S.-H."/>
            <person name="Kidwai A.S."/>
            <person name="Breschel T.S."/>
            <person name="Stine O.C."/>
            <person name="Callahan C."/>
            <person name="McInnis M.G."/>
            <person name="Ross C.A."/>
        </authorList>
    </citation>
    <scope>NUCLEOTIDE SEQUENCE [MRNA] OF 2463-3159</scope>
    <source>
        <tissue>Brain</tissue>
    </source>
</reference>
<reference key="8">
    <citation type="journal article" date="2003" name="J. Biol. Chem.">
        <title>Identification of new subunits of the multiprotein mammalian TRRAP/TIP60-containing histone acetyltransferase complex.</title>
        <authorList>
            <person name="Cai Y."/>
            <person name="Jin J."/>
            <person name="Tomomori-Sato C."/>
            <person name="Sato S."/>
            <person name="Sorokina I."/>
            <person name="Parmely T.J."/>
            <person name="Conaway R.C."/>
            <person name="Conaway J.W."/>
        </authorList>
    </citation>
    <scope>IDENTIFICATION IN NUA4 COMPLEX</scope>
</reference>
<reference key="9">
    <citation type="journal article" date="2004" name="Curr. Opin. Genet. Dev.">
        <title>The highly conserved and multifunctional NuA4 HAT complex.</title>
        <authorList>
            <person name="Doyon Y."/>
            <person name="Cote J."/>
        </authorList>
    </citation>
    <scope>REVIEW ON NUA4 COMPLEX</scope>
</reference>
<reference key="10">
    <citation type="journal article" date="2004" name="Mol. Cell. Biol.">
        <title>Structural and functional conservation of the NuA4 histone acetyltransferase complex from yeast to humans.</title>
        <authorList>
            <person name="Doyon Y."/>
            <person name="Selleck W."/>
            <person name="Lane W.S."/>
            <person name="Tan S."/>
            <person name="Cote J."/>
        </authorList>
    </citation>
    <scope>FUNCTION</scope>
    <scope>IDENTIFICATION BY MASS SPECTROMETRY</scope>
    <scope>IDENTIFICATION IN NUA4 COMPLEX</scope>
    <scope>IDENTIFICATION IN SRCAP-CONTAINING COMPLEX</scope>
</reference>
<reference key="11">
    <citation type="journal article" date="2006" name="Cell">
        <title>Global, in vivo, and site-specific phosphorylation dynamics in signaling networks.</title>
        <authorList>
            <person name="Olsen J.V."/>
            <person name="Blagoev B."/>
            <person name="Gnad F."/>
            <person name="Macek B."/>
            <person name="Kumar C."/>
            <person name="Mortensen P."/>
            <person name="Mann M."/>
        </authorList>
    </citation>
    <scope>IDENTIFICATION BY MASS SPECTROMETRY [LARGE SCALE ANALYSIS]</scope>
    <source>
        <tissue>Cervix carcinoma</tissue>
    </source>
</reference>
<reference key="12">
    <citation type="journal article" date="2008" name="Proc. Natl. Acad. Sci. U.S.A.">
        <title>A quantitative atlas of mitotic phosphorylation.</title>
        <authorList>
            <person name="Dephoure N."/>
            <person name="Zhou C."/>
            <person name="Villen J."/>
            <person name="Beausoleil S.A."/>
            <person name="Bakalarski C.E."/>
            <person name="Elledge S.J."/>
            <person name="Gygi S.P."/>
        </authorList>
    </citation>
    <scope>PHOSPHORYLATION [LARGE SCALE ANALYSIS] AT SER-941; THR-945; SER-1728 AND SER-1732</scope>
    <scope>IDENTIFICATION BY MASS SPECTROMETRY [LARGE SCALE ANALYSIS]</scope>
    <source>
        <tissue>Cervix carcinoma</tissue>
    </source>
</reference>
<reference key="13">
    <citation type="journal article" date="2008" name="Proc. Natl. Acad. Sci. U.S.A.">
        <title>Adenovirus E1A targets p400 to induce the cellular oncoprotein Myc.</title>
        <authorList>
            <person name="Tworkowski K.A."/>
            <person name="Chakraborty A.A."/>
            <person name="Samuelson A.V."/>
            <person name="Seger Y.R."/>
            <person name="Narita M."/>
            <person name="Hannon G.J."/>
            <person name="Lowe S.W."/>
            <person name="Tansey W.P."/>
        </authorList>
    </citation>
    <scope>INTERACTION WITH HADV5 E1A</scope>
</reference>
<reference key="14">
    <citation type="journal article" date="2009" name="Anal. Chem.">
        <title>Lys-N and trypsin cover complementary parts of the phosphoproteome in a refined SCX-based approach.</title>
        <authorList>
            <person name="Gauci S."/>
            <person name="Helbig A.O."/>
            <person name="Slijper M."/>
            <person name="Krijgsveld J."/>
            <person name="Heck A.J."/>
            <person name="Mohammed S."/>
        </authorList>
    </citation>
    <scope>IDENTIFICATION BY MASS SPECTROMETRY [LARGE SCALE ANALYSIS]</scope>
</reference>
<reference key="15">
    <citation type="journal article" date="2009" name="Sci. Signal.">
        <title>Quantitative phosphoproteomic analysis of T cell receptor signaling reveals system-wide modulation of protein-protein interactions.</title>
        <authorList>
            <person name="Mayya V."/>
            <person name="Lundgren D.H."/>
            <person name="Hwang S.-I."/>
            <person name="Rezaul K."/>
            <person name="Wu L."/>
            <person name="Eng J.K."/>
            <person name="Rodionov V."/>
            <person name="Han D.K."/>
        </authorList>
    </citation>
    <scope>IDENTIFICATION BY MASS SPECTROMETRY [LARGE SCALE ANALYSIS]</scope>
    <source>
        <tissue>Leukemic T-cell</tissue>
    </source>
</reference>
<reference key="16">
    <citation type="journal article" date="2009" name="Science">
        <title>Lysine acetylation targets protein complexes and co-regulates major cellular functions.</title>
        <authorList>
            <person name="Choudhary C."/>
            <person name="Kumar C."/>
            <person name="Gnad F."/>
            <person name="Nielsen M.L."/>
            <person name="Rehman M."/>
            <person name="Walther T.C."/>
            <person name="Olsen J.V."/>
            <person name="Mann M."/>
        </authorList>
    </citation>
    <scope>ACETYLATION [LARGE SCALE ANALYSIS] AT LYS-1472; LYS-2349 AND LYS-2356</scope>
    <scope>IDENTIFICATION BY MASS SPECTROMETRY [LARGE SCALE ANALYSIS]</scope>
</reference>
<reference key="17">
    <citation type="journal article" date="2010" name="Sci. Signal.">
        <title>Quantitative phosphoproteomics reveals widespread full phosphorylation site occupancy during mitosis.</title>
        <authorList>
            <person name="Olsen J.V."/>
            <person name="Vermeulen M."/>
            <person name="Santamaria A."/>
            <person name="Kumar C."/>
            <person name="Miller M.L."/>
            <person name="Jensen L.J."/>
            <person name="Gnad F."/>
            <person name="Cox J."/>
            <person name="Jensen T.S."/>
            <person name="Nigg E.A."/>
            <person name="Brunak S."/>
            <person name="Mann M."/>
        </authorList>
    </citation>
    <scope>PHOSPHORYLATION [LARGE SCALE ANALYSIS] AT SER-736 AND THR-2813</scope>
    <scope>IDENTIFICATION BY MASS SPECTROMETRY [LARGE SCALE ANALYSIS]</scope>
    <source>
        <tissue>Cervix carcinoma</tissue>
    </source>
</reference>
<reference key="18">
    <citation type="journal article" date="2011" name="BMC Syst. Biol.">
        <title>Initial characterization of the human central proteome.</title>
        <authorList>
            <person name="Burkard T.R."/>
            <person name="Planyavsky M."/>
            <person name="Kaupe I."/>
            <person name="Breitwieser F.P."/>
            <person name="Buerckstuemmer T."/>
            <person name="Bennett K.L."/>
            <person name="Superti-Furga G."/>
            <person name="Colinge J."/>
        </authorList>
    </citation>
    <scope>IDENTIFICATION BY MASS SPECTROMETRY [LARGE SCALE ANALYSIS]</scope>
</reference>
<reference key="19">
    <citation type="journal article" date="2011" name="Cell Host Microbe">
        <title>Antiviral inhibition targeting the HCMV kinase pUL97 requires pUL27-dependent proteasomal degradation of Tip60 acetyltransferase and cell-cycle arrest.</title>
        <authorList>
            <person name="Reitsma J.M."/>
            <person name="Savaryn J.P."/>
            <person name="Faust K."/>
            <person name="Sato H."/>
            <person name="Halligan B.D."/>
            <person name="Terhune S.S."/>
        </authorList>
    </citation>
    <scope>INTERACTION WITH HUMAN CYTOMEGALOVIRUS UL27</scope>
</reference>
<reference key="20">
    <citation type="journal article" date="2011" name="Sci. Signal.">
        <title>System-wide temporal characterization of the proteome and phosphoproteome of human embryonic stem cell differentiation.</title>
        <authorList>
            <person name="Rigbolt K.T."/>
            <person name="Prokhorova T.A."/>
            <person name="Akimov V."/>
            <person name="Henningsen J."/>
            <person name="Johansen P.T."/>
            <person name="Kratchmarova I."/>
            <person name="Kassem M."/>
            <person name="Mann M."/>
            <person name="Olsen J.V."/>
            <person name="Blagoev B."/>
        </authorList>
    </citation>
    <scope>PHOSPHORYLATION [LARGE SCALE ANALYSIS] AT SER-736</scope>
    <scope>IDENTIFICATION BY MASS SPECTROMETRY [LARGE SCALE ANALYSIS]</scope>
</reference>
<reference key="21">
    <citation type="journal article" date="2013" name="J. Proteome Res.">
        <title>Toward a comprehensive characterization of a human cancer cell phosphoproteome.</title>
        <authorList>
            <person name="Zhou H."/>
            <person name="Di Palma S."/>
            <person name="Preisinger C."/>
            <person name="Peng M."/>
            <person name="Polat A.N."/>
            <person name="Heck A.J."/>
            <person name="Mohammed S."/>
        </authorList>
    </citation>
    <scope>PHOSPHORYLATION [LARGE SCALE ANALYSIS] AT SER-736; SER-1547; SER-2686 AND THR-2813</scope>
    <scope>IDENTIFICATION BY MASS SPECTROMETRY [LARGE SCALE ANALYSIS]</scope>
    <source>
        <tissue>Cervix carcinoma</tissue>
        <tissue>Erythroleukemia</tissue>
    </source>
</reference>
<reference key="22">
    <citation type="journal article" date="2014" name="J. Proteomics">
        <title>An enzyme assisted RP-RPLC approach for in-depth analysis of human liver phosphoproteome.</title>
        <authorList>
            <person name="Bian Y."/>
            <person name="Song C."/>
            <person name="Cheng K."/>
            <person name="Dong M."/>
            <person name="Wang F."/>
            <person name="Huang J."/>
            <person name="Sun D."/>
            <person name="Wang L."/>
            <person name="Ye M."/>
            <person name="Zou H."/>
        </authorList>
    </citation>
    <scope>PHOSPHORYLATION [LARGE SCALE ANALYSIS] AT SER-736</scope>
    <scope>IDENTIFICATION BY MASS SPECTROMETRY [LARGE SCALE ANALYSIS]</scope>
    <source>
        <tissue>Liver</tissue>
    </source>
</reference>
<reference key="23">
    <citation type="journal article" date="2014" name="Nature">
        <title>ANP32E is a histone chaperone that removes H2A.Z from chromatin.</title>
        <authorList>
            <person name="Obri A."/>
            <person name="Ouararhni K."/>
            <person name="Papin C."/>
            <person name="Diebold M.L."/>
            <person name="Padmanabhan K."/>
            <person name="Marek M."/>
            <person name="Stoll I."/>
            <person name="Roy L."/>
            <person name="Reilly P.T."/>
            <person name="Mak T.W."/>
            <person name="Dimitrov S."/>
            <person name="Romier C."/>
            <person name="Hamiche A."/>
        </authorList>
    </citation>
    <scope>FUNCTION</scope>
    <scope>IDENTIFICATION IN THE SWR1-LIKE COMPLEX</scope>
</reference>
<dbReference type="EC" id="3.6.4.-"/>
<dbReference type="EMBL" id="AY044869">
    <property type="protein sequence ID" value="AAK97789.1"/>
    <property type="molecule type" value="mRNA"/>
</dbReference>
<dbReference type="EMBL" id="AC137590">
    <property type="status" value="NOT_ANNOTATED_CDS"/>
    <property type="molecule type" value="Genomic_DNA"/>
</dbReference>
<dbReference type="EMBL" id="AC137632">
    <property type="status" value="NOT_ANNOTATED_CDS"/>
    <property type="molecule type" value="Genomic_DNA"/>
</dbReference>
<dbReference type="EMBL" id="AB040931">
    <property type="protein sequence ID" value="BAA96022.1"/>
    <property type="status" value="ALT_INIT"/>
    <property type="molecule type" value="mRNA"/>
</dbReference>
<dbReference type="EMBL" id="AK096311">
    <property type="protein sequence ID" value="BAC04759.1"/>
    <property type="molecule type" value="mRNA"/>
</dbReference>
<dbReference type="EMBL" id="BC037208">
    <property type="protein sequence ID" value="AAH37208.1"/>
    <property type="status" value="ALT_SEQ"/>
    <property type="molecule type" value="mRNA"/>
</dbReference>
<dbReference type="EMBL" id="BC064554">
    <property type="protein sequence ID" value="AAH64554.1"/>
    <property type="status" value="ALT_SEQ"/>
    <property type="molecule type" value="mRNA"/>
</dbReference>
<dbReference type="EMBL" id="AB058721">
    <property type="protein sequence ID" value="BAB47447.1"/>
    <property type="molecule type" value="mRNA"/>
</dbReference>
<dbReference type="EMBL" id="U80743">
    <property type="protein sequence ID" value="AAB91441.1"/>
    <property type="status" value="ALT_FRAME"/>
    <property type="molecule type" value="mRNA"/>
</dbReference>
<dbReference type="CCDS" id="CCDS31929.2">
    <molecule id="Q96L91-2"/>
</dbReference>
<dbReference type="RefSeq" id="NP_056224.3">
    <molecule id="Q96L91-2"/>
    <property type="nucleotide sequence ID" value="NM_015409.5"/>
</dbReference>
<dbReference type="PDB" id="8QR1">
    <property type="method" value="EM"/>
    <property type="resolution" value="2.40 A"/>
    <property type="chains" value="A=1-3159"/>
</dbReference>
<dbReference type="PDB" id="8QRI">
    <property type="method" value="EM"/>
    <property type="resolution" value="3.50 A"/>
    <property type="chains" value="A=1-3159"/>
</dbReference>
<dbReference type="PDB" id="8XVG">
    <property type="method" value="EM"/>
    <property type="resolution" value="9.40 A"/>
    <property type="chains" value="H=1-3159"/>
</dbReference>
<dbReference type="PDB" id="8XVT">
    <property type="method" value="EM"/>
    <property type="resolution" value="3.20 A"/>
    <property type="chains" value="H=1-3159"/>
</dbReference>
<dbReference type="PDB" id="8XVV">
    <property type="method" value="EM"/>
    <property type="resolution" value="3.20 A"/>
    <property type="chains" value="H=1-3159"/>
</dbReference>
<dbReference type="PDB" id="9C47">
    <property type="method" value="EM"/>
    <property type="resolution" value="3.40 A"/>
    <property type="chains" value="G=1-3159"/>
</dbReference>
<dbReference type="PDB" id="9C57">
    <property type="method" value="EM"/>
    <property type="resolution" value="2.75 A"/>
    <property type="chains" value="G=1-3159"/>
</dbReference>
<dbReference type="PDB" id="9C62">
    <property type="method" value="EM"/>
    <property type="resolution" value="5.28 A"/>
    <property type="chains" value="G=1-3159"/>
</dbReference>
<dbReference type="PDB" id="9C6N">
    <property type="method" value="EM"/>
    <property type="resolution" value="3.29 A"/>
    <property type="chains" value="G=1-3159"/>
</dbReference>
<dbReference type="PDBsum" id="8QR1"/>
<dbReference type="PDBsum" id="8QRI"/>
<dbReference type="PDBsum" id="8XVG"/>
<dbReference type="PDBsum" id="8XVT"/>
<dbReference type="PDBsum" id="8XVV"/>
<dbReference type="PDBsum" id="9C47"/>
<dbReference type="PDBsum" id="9C57"/>
<dbReference type="PDBsum" id="9C62"/>
<dbReference type="PDBsum" id="9C6N"/>
<dbReference type="EMDB" id="EMD-18581"/>
<dbReference type="EMDB" id="EMD-18591"/>
<dbReference type="EMDB" id="EMD-18597"/>
<dbReference type="EMDB" id="EMD-18598"/>
<dbReference type="EMDB" id="EMD-18611"/>
<dbReference type="EMDB" id="EMD-18612"/>
<dbReference type="EMDB" id="EMD-18613"/>
<dbReference type="EMDB" id="EMD-18618"/>
<dbReference type="EMDB" id="EMD-18619"/>
<dbReference type="EMDB" id="EMD-18794"/>
<dbReference type="EMDB" id="EMD-38703"/>
<dbReference type="EMDB" id="EMD-38718"/>
<dbReference type="EMDB" id="EMD-38720"/>
<dbReference type="EMDB" id="EMD-45176"/>
<dbReference type="EMDB" id="EMD-45206"/>
<dbReference type="EMDB" id="EMD-45240"/>
<dbReference type="EMDB" id="EMD-45252"/>
<dbReference type="SMR" id="Q96L91"/>
<dbReference type="BioGRID" id="121676">
    <property type="interactions" value="200"/>
</dbReference>
<dbReference type="ComplexPortal" id="CPX-978">
    <property type="entry name" value="NuA4 histone acetyltransferase complex"/>
</dbReference>
<dbReference type="CORUM" id="Q96L91"/>
<dbReference type="DIP" id="DIP-29915N"/>
<dbReference type="FunCoup" id="Q96L91">
    <property type="interactions" value="3027"/>
</dbReference>
<dbReference type="IntAct" id="Q96L91">
    <property type="interactions" value="125"/>
</dbReference>
<dbReference type="MINT" id="Q96L91"/>
<dbReference type="STRING" id="9606.ENSP00000374212"/>
<dbReference type="GlyCosmos" id="Q96L91">
    <property type="glycosylation" value="30 sites, 2 glycans"/>
</dbReference>
<dbReference type="GlyGen" id="Q96L91">
    <property type="glycosylation" value="62 sites, 1 N-linked glycan (1 site), 3 O-linked glycans (56 sites)"/>
</dbReference>
<dbReference type="iPTMnet" id="Q96L91"/>
<dbReference type="PhosphoSitePlus" id="Q96L91"/>
<dbReference type="BioMuta" id="EP400"/>
<dbReference type="DMDM" id="317373565"/>
<dbReference type="jPOST" id="Q96L91"/>
<dbReference type="MassIVE" id="Q96L91"/>
<dbReference type="PaxDb" id="9606-ENSP00000374213"/>
<dbReference type="PeptideAtlas" id="Q96L91"/>
<dbReference type="ProteomicsDB" id="77156">
    <molecule id="Q96L91-1"/>
</dbReference>
<dbReference type="ProteomicsDB" id="77157">
    <molecule id="Q96L91-2"/>
</dbReference>
<dbReference type="ProteomicsDB" id="77158">
    <molecule id="Q96L91-3"/>
</dbReference>
<dbReference type="ProteomicsDB" id="77159">
    <molecule id="Q96L91-4"/>
</dbReference>
<dbReference type="ProteomicsDB" id="77160">
    <molecule id="Q96L91-5"/>
</dbReference>
<dbReference type="Pumba" id="Q96L91"/>
<dbReference type="Antibodypedia" id="19445">
    <property type="antibodies" value="102 antibodies from 20 providers"/>
</dbReference>
<dbReference type="DNASU" id="57634"/>
<dbReference type="Ensembl" id="ENST00000389561.7">
    <molecule id="Q96L91-2"/>
    <property type="protein sequence ID" value="ENSP00000374212.2"/>
    <property type="gene ID" value="ENSG00000183495.15"/>
</dbReference>
<dbReference type="GeneID" id="57634"/>
<dbReference type="KEGG" id="hsa:57634"/>
<dbReference type="MANE-Select" id="ENST00000389561.7">
    <molecule id="Q96L91-2"/>
    <property type="protein sequence ID" value="ENSP00000374212.2"/>
    <property type="RefSeq nucleotide sequence ID" value="NM_015409.5"/>
    <property type="RefSeq protein sequence ID" value="NP_056224.3"/>
</dbReference>
<dbReference type="UCSC" id="uc001ujn.3">
    <molecule id="Q96L91-1"/>
    <property type="organism name" value="human"/>
</dbReference>
<dbReference type="AGR" id="HGNC:11958"/>
<dbReference type="CTD" id="57634"/>
<dbReference type="DisGeNET" id="57634"/>
<dbReference type="GeneCards" id="EP400"/>
<dbReference type="HGNC" id="HGNC:11958">
    <property type="gene designation" value="EP400"/>
</dbReference>
<dbReference type="HPA" id="ENSG00000183495">
    <property type="expression patterns" value="Low tissue specificity"/>
</dbReference>
<dbReference type="MIM" id="606265">
    <property type="type" value="gene"/>
</dbReference>
<dbReference type="neXtProt" id="NX_Q96L91"/>
<dbReference type="OpenTargets" id="ENSG00000183495"/>
<dbReference type="PharmGKB" id="PA27808"/>
<dbReference type="VEuPathDB" id="HostDB:ENSG00000183495"/>
<dbReference type="eggNOG" id="KOG0391">
    <property type="taxonomic scope" value="Eukaryota"/>
</dbReference>
<dbReference type="GeneTree" id="ENSGT00940000154764"/>
<dbReference type="HOGENOM" id="CLU_000397_0_0_1"/>
<dbReference type="InParanoid" id="Q96L91"/>
<dbReference type="OMA" id="YGEDCRG"/>
<dbReference type="OrthoDB" id="372624at2759"/>
<dbReference type="PAN-GO" id="Q96L91">
    <property type="GO annotations" value="5 GO annotations based on evolutionary models"/>
</dbReference>
<dbReference type="PhylomeDB" id="Q96L91"/>
<dbReference type="TreeFam" id="TF106424"/>
<dbReference type="PathwayCommons" id="Q96L91"/>
<dbReference type="Reactome" id="R-HSA-2559584">
    <property type="pathway name" value="Formation of Senescence-Associated Heterochromatin Foci (SAHF)"/>
</dbReference>
<dbReference type="Reactome" id="R-HSA-2559586">
    <property type="pathway name" value="DNA Damage/Telomere Stress Induced Senescence"/>
</dbReference>
<dbReference type="Reactome" id="R-HSA-3214847">
    <property type="pathway name" value="HATs acetylate histones"/>
</dbReference>
<dbReference type="SignaLink" id="Q96L91"/>
<dbReference type="SIGNOR" id="Q96L91"/>
<dbReference type="BioGRID-ORCS" id="57634">
    <property type="hits" value="497 hits in 1112 CRISPR screens"/>
</dbReference>
<dbReference type="ChiTaRS" id="EP400">
    <property type="organism name" value="human"/>
</dbReference>
<dbReference type="GeneWiki" id="EP400"/>
<dbReference type="GenomeRNAi" id="57634"/>
<dbReference type="Pharos" id="Q96L91">
    <property type="development level" value="Tbio"/>
</dbReference>
<dbReference type="PRO" id="PR:Q96L91"/>
<dbReference type="Proteomes" id="UP000005640">
    <property type="component" value="Chromosome 12"/>
</dbReference>
<dbReference type="RNAct" id="Q96L91">
    <property type="molecule type" value="protein"/>
</dbReference>
<dbReference type="Bgee" id="ENSG00000183495">
    <property type="expression patterns" value="Expressed in tendon of biceps brachii and 199 other cell types or tissues"/>
</dbReference>
<dbReference type="ExpressionAtlas" id="Q96L91">
    <property type="expression patterns" value="baseline and differential"/>
</dbReference>
<dbReference type="GO" id="GO:0035267">
    <property type="term" value="C:NuA4 histone acetyltransferase complex"/>
    <property type="evidence" value="ECO:0000314"/>
    <property type="project" value="UniProtKB"/>
</dbReference>
<dbReference type="GO" id="GO:0016607">
    <property type="term" value="C:nuclear speck"/>
    <property type="evidence" value="ECO:0000250"/>
    <property type="project" value="UniProtKB"/>
</dbReference>
<dbReference type="GO" id="GO:0005654">
    <property type="term" value="C:nucleoplasm"/>
    <property type="evidence" value="ECO:0000304"/>
    <property type="project" value="Reactome"/>
</dbReference>
<dbReference type="GO" id="GO:0000786">
    <property type="term" value="C:nucleosome"/>
    <property type="evidence" value="ECO:0000314"/>
    <property type="project" value="ComplexPortal"/>
</dbReference>
<dbReference type="GO" id="GO:0000812">
    <property type="term" value="C:Swr1 complex"/>
    <property type="evidence" value="ECO:0000314"/>
    <property type="project" value="UniProtKB"/>
</dbReference>
<dbReference type="GO" id="GO:0005524">
    <property type="term" value="F:ATP binding"/>
    <property type="evidence" value="ECO:0007669"/>
    <property type="project" value="UniProtKB-KW"/>
</dbReference>
<dbReference type="GO" id="GO:0003682">
    <property type="term" value="F:chromatin binding"/>
    <property type="evidence" value="ECO:0000318"/>
    <property type="project" value="GO_Central"/>
</dbReference>
<dbReference type="GO" id="GO:0003677">
    <property type="term" value="F:DNA binding"/>
    <property type="evidence" value="ECO:0007669"/>
    <property type="project" value="UniProtKB-KW"/>
</dbReference>
<dbReference type="GO" id="GO:0004386">
    <property type="term" value="F:helicase activity"/>
    <property type="evidence" value="ECO:0007669"/>
    <property type="project" value="UniProtKB-KW"/>
</dbReference>
<dbReference type="GO" id="GO:0016787">
    <property type="term" value="F:hydrolase activity"/>
    <property type="evidence" value="ECO:0007669"/>
    <property type="project" value="UniProtKB-KW"/>
</dbReference>
<dbReference type="GO" id="GO:1990405">
    <property type="term" value="F:protein antigen binding"/>
    <property type="evidence" value="ECO:0007669"/>
    <property type="project" value="Ensembl"/>
</dbReference>
<dbReference type="GO" id="GO:0006325">
    <property type="term" value="P:chromatin organization"/>
    <property type="evidence" value="ECO:0007669"/>
    <property type="project" value="UniProtKB-KW"/>
</dbReference>
<dbReference type="GO" id="GO:0006281">
    <property type="term" value="P:DNA repair"/>
    <property type="evidence" value="ECO:0000318"/>
    <property type="project" value="GO_Central"/>
</dbReference>
<dbReference type="GO" id="GO:0045893">
    <property type="term" value="P:positive regulation of DNA-templated transcription"/>
    <property type="evidence" value="ECO:0000303"/>
    <property type="project" value="ComplexPortal"/>
</dbReference>
<dbReference type="GO" id="GO:1905168">
    <property type="term" value="P:positive regulation of double-strand break repair via homologous recombination"/>
    <property type="evidence" value="ECO:0000314"/>
    <property type="project" value="ComplexPortal"/>
</dbReference>
<dbReference type="GO" id="GO:0042981">
    <property type="term" value="P:regulation of apoptotic process"/>
    <property type="evidence" value="ECO:0000303"/>
    <property type="project" value="ComplexPortal"/>
</dbReference>
<dbReference type="GO" id="GO:0051726">
    <property type="term" value="P:regulation of cell cycle"/>
    <property type="evidence" value="ECO:0000315"/>
    <property type="project" value="ComplexPortal"/>
</dbReference>
<dbReference type="GO" id="GO:2000779">
    <property type="term" value="P:regulation of double-strand break repair"/>
    <property type="evidence" value="ECO:0000303"/>
    <property type="project" value="ComplexPortal"/>
</dbReference>
<dbReference type="CDD" id="cd18793">
    <property type="entry name" value="SF2_C_SNF"/>
    <property type="match status" value="1"/>
</dbReference>
<dbReference type="FunFam" id="3.40.50.300:FF:001580">
    <property type="entry name" value="E1A binding protein p400"/>
    <property type="match status" value="1"/>
</dbReference>
<dbReference type="FunFam" id="3.40.50.10810:FF:000033">
    <property type="entry name" value="E1A-binding protein p400 isoform X9"/>
    <property type="match status" value="1"/>
</dbReference>
<dbReference type="Gene3D" id="1.10.10.60">
    <property type="entry name" value="Homeodomain-like"/>
    <property type="match status" value="1"/>
</dbReference>
<dbReference type="Gene3D" id="3.40.50.300">
    <property type="entry name" value="P-loop containing nucleotide triphosphate hydrolases"/>
    <property type="match status" value="1"/>
</dbReference>
<dbReference type="Gene3D" id="3.40.50.10810">
    <property type="entry name" value="Tandem AAA-ATPase domain"/>
    <property type="match status" value="1"/>
</dbReference>
<dbReference type="InterPro" id="IPR031575">
    <property type="entry name" value="EP400_N"/>
</dbReference>
<dbReference type="InterPro" id="IPR014001">
    <property type="entry name" value="Helicase_ATP-bd"/>
</dbReference>
<dbReference type="InterPro" id="IPR001650">
    <property type="entry name" value="Helicase_C-like"/>
</dbReference>
<dbReference type="InterPro" id="IPR014012">
    <property type="entry name" value="HSA_dom"/>
</dbReference>
<dbReference type="InterPro" id="IPR027417">
    <property type="entry name" value="P-loop_NTPase"/>
</dbReference>
<dbReference type="InterPro" id="IPR001005">
    <property type="entry name" value="SANT/Myb"/>
</dbReference>
<dbReference type="InterPro" id="IPR038718">
    <property type="entry name" value="SNF2-like_sf"/>
</dbReference>
<dbReference type="InterPro" id="IPR049730">
    <property type="entry name" value="SNF2/RAD54-like_C"/>
</dbReference>
<dbReference type="InterPro" id="IPR000330">
    <property type="entry name" value="SNF2_N"/>
</dbReference>
<dbReference type="PANTHER" id="PTHR46459:SF1">
    <property type="entry name" value="E1A-BINDING PROTEIN P400"/>
    <property type="match status" value="1"/>
</dbReference>
<dbReference type="PANTHER" id="PTHR46459">
    <property type="entry name" value="E1A-BINDING PROTEIN P400-RELATED"/>
    <property type="match status" value="1"/>
</dbReference>
<dbReference type="Pfam" id="PF15790">
    <property type="entry name" value="EP400_N"/>
    <property type="match status" value="1"/>
</dbReference>
<dbReference type="Pfam" id="PF00271">
    <property type="entry name" value="Helicase_C"/>
    <property type="match status" value="1"/>
</dbReference>
<dbReference type="Pfam" id="PF07529">
    <property type="entry name" value="HSA"/>
    <property type="match status" value="1"/>
</dbReference>
<dbReference type="Pfam" id="PF00176">
    <property type="entry name" value="SNF2-rel_dom"/>
    <property type="match status" value="1"/>
</dbReference>
<dbReference type="SMART" id="SM00487">
    <property type="entry name" value="DEXDc"/>
    <property type="match status" value="1"/>
</dbReference>
<dbReference type="SMART" id="SM00490">
    <property type="entry name" value="HELICc"/>
    <property type="match status" value="1"/>
</dbReference>
<dbReference type="SMART" id="SM00573">
    <property type="entry name" value="HSA"/>
    <property type="match status" value="1"/>
</dbReference>
<dbReference type="SUPFAM" id="SSF52540">
    <property type="entry name" value="P-loop containing nucleoside triphosphate hydrolases"/>
    <property type="match status" value="3"/>
</dbReference>
<dbReference type="PROSITE" id="PS51192">
    <property type="entry name" value="HELICASE_ATP_BIND_1"/>
    <property type="match status" value="1"/>
</dbReference>
<dbReference type="PROSITE" id="PS51194">
    <property type="entry name" value="HELICASE_CTER"/>
    <property type="match status" value="1"/>
</dbReference>
<dbReference type="PROSITE" id="PS51204">
    <property type="entry name" value="HSA"/>
    <property type="match status" value="1"/>
</dbReference>
<dbReference type="PROSITE" id="PS50090">
    <property type="entry name" value="MYB_LIKE"/>
    <property type="match status" value="1"/>
</dbReference>